<protein>
    <recommendedName>
        <fullName evidence="1">UPF0336 protein SGR_2883</fullName>
    </recommendedName>
</protein>
<feature type="chain" id="PRO_1000200700" description="UPF0336 protein SGR_2883">
    <location>
        <begin position="1"/>
        <end position="150"/>
    </location>
</feature>
<feature type="domain" description="MaoC-like">
    <location>
        <begin position="10"/>
        <end position="116"/>
    </location>
</feature>
<dbReference type="EMBL" id="AP009493">
    <property type="protein sequence ID" value="BAG19712.1"/>
    <property type="molecule type" value="Genomic_DNA"/>
</dbReference>
<dbReference type="RefSeq" id="WP_003967009.1">
    <property type="nucleotide sequence ID" value="NC_010572.1"/>
</dbReference>
<dbReference type="SMR" id="B1W4R8"/>
<dbReference type="KEGG" id="sgr:SGR_2883"/>
<dbReference type="eggNOG" id="COG2030">
    <property type="taxonomic scope" value="Bacteria"/>
</dbReference>
<dbReference type="HOGENOM" id="CLU_116276_0_0_11"/>
<dbReference type="Proteomes" id="UP000001685">
    <property type="component" value="Chromosome"/>
</dbReference>
<dbReference type="GO" id="GO:0019171">
    <property type="term" value="F:(3R)-hydroxyacyl-[acyl-carrier-protein] dehydratase activity"/>
    <property type="evidence" value="ECO:0007669"/>
    <property type="project" value="TreeGrafter"/>
</dbReference>
<dbReference type="GO" id="GO:0006633">
    <property type="term" value="P:fatty acid biosynthetic process"/>
    <property type="evidence" value="ECO:0007669"/>
    <property type="project" value="TreeGrafter"/>
</dbReference>
<dbReference type="CDD" id="cd03441">
    <property type="entry name" value="R_hydratase_like"/>
    <property type="match status" value="1"/>
</dbReference>
<dbReference type="Gene3D" id="3.10.129.10">
    <property type="entry name" value="Hotdog Thioesterase"/>
    <property type="match status" value="1"/>
</dbReference>
<dbReference type="HAMAP" id="MF_00799">
    <property type="entry name" value="UPF0336"/>
    <property type="match status" value="1"/>
</dbReference>
<dbReference type="InterPro" id="IPR039569">
    <property type="entry name" value="FAS1-like_DH_region"/>
</dbReference>
<dbReference type="InterPro" id="IPR016709">
    <property type="entry name" value="HadA-like"/>
</dbReference>
<dbReference type="InterPro" id="IPR029069">
    <property type="entry name" value="HotDog_dom_sf"/>
</dbReference>
<dbReference type="InterPro" id="IPR050965">
    <property type="entry name" value="UPF0336/Enoyl-CoA_hydratase"/>
</dbReference>
<dbReference type="PANTHER" id="PTHR43437:SF3">
    <property type="entry name" value="HYDROXYACYL-THIOESTER DEHYDRATASE TYPE 2, MITOCHONDRIAL"/>
    <property type="match status" value="1"/>
</dbReference>
<dbReference type="PANTHER" id="PTHR43437">
    <property type="entry name" value="HYDROXYACYL-THIOESTER DEHYDRATASE TYPE 2, MITOCHONDRIAL-RELATED"/>
    <property type="match status" value="1"/>
</dbReference>
<dbReference type="Pfam" id="PF13452">
    <property type="entry name" value="FAS1_DH_region"/>
    <property type="match status" value="1"/>
</dbReference>
<dbReference type="PIRSF" id="PIRSF018072">
    <property type="entry name" value="UCP018072"/>
    <property type="match status" value="1"/>
</dbReference>
<dbReference type="SUPFAM" id="SSF54637">
    <property type="entry name" value="Thioesterase/thiol ester dehydrase-isomerase"/>
    <property type="match status" value="1"/>
</dbReference>
<name>Y2883_STRGG</name>
<comment type="similarity">
    <text evidence="1">Belongs to the UPF0336 family.</text>
</comment>
<organism>
    <name type="scientific">Streptomyces griseus subsp. griseus (strain JCM 4626 / CBS 651.72 / NBRC 13350 / KCC S-0626 / ISP 5235)</name>
    <dbReference type="NCBI Taxonomy" id="455632"/>
    <lineage>
        <taxon>Bacteria</taxon>
        <taxon>Bacillati</taxon>
        <taxon>Actinomycetota</taxon>
        <taxon>Actinomycetes</taxon>
        <taxon>Kitasatosporales</taxon>
        <taxon>Streptomycetaceae</taxon>
        <taxon>Streptomyces</taxon>
    </lineage>
</organism>
<proteinExistence type="inferred from homology"/>
<reference key="1">
    <citation type="journal article" date="2008" name="J. Bacteriol.">
        <title>Genome sequence of the streptomycin-producing microorganism Streptomyces griseus IFO 13350.</title>
        <authorList>
            <person name="Ohnishi Y."/>
            <person name="Ishikawa J."/>
            <person name="Hara H."/>
            <person name="Suzuki H."/>
            <person name="Ikenoya M."/>
            <person name="Ikeda H."/>
            <person name="Yamashita A."/>
            <person name="Hattori M."/>
            <person name="Horinouchi S."/>
        </authorList>
    </citation>
    <scope>NUCLEOTIDE SEQUENCE [LARGE SCALE GENOMIC DNA]</scope>
    <source>
        <strain>JCM 4626 / CBS 651.72 / NBRC 13350 / KCC S-0626 / ISP 5235</strain>
    </source>
</reference>
<sequence length="150" mass="16212">MALDQSFVGRTYPPTPAYEVGREKIREFAEAVGDTHPAYVDAEAARALGHADVIAPPTFVFSITYRAAGEVVRDPQLGLDYSRVVHGDQKFSYVRPVRAGDRLTVTSTIEAVKSLAGNDIVDIRGDVHDETGELVVTALTKLVARAAEEA</sequence>
<evidence type="ECO:0000255" key="1">
    <source>
        <dbReference type="HAMAP-Rule" id="MF_00799"/>
    </source>
</evidence>
<gene>
    <name type="ordered locus">SGR_2883</name>
</gene>
<accession>B1W4R8</accession>